<evidence type="ECO:0000255" key="1">
    <source>
        <dbReference type="HAMAP-Rule" id="MF_01850"/>
    </source>
</evidence>
<name>TTCA_HAEI8</name>
<comment type="function">
    <text evidence="1">Catalyzes the ATP-dependent 2-thiolation of cytidine in position 32 of tRNA, to form 2-thiocytidine (s(2)C32). The sulfur atoms are provided by the cysteine/cysteine desulfurase (IscS) system.</text>
</comment>
<comment type="catalytic activity">
    <reaction evidence="1">
        <text>cytidine(32) in tRNA + S-sulfanyl-L-cysteinyl-[cysteine desulfurase] + AH2 + ATP = 2-thiocytidine(32) in tRNA + L-cysteinyl-[cysteine desulfurase] + A + AMP + diphosphate + H(+)</text>
        <dbReference type="Rhea" id="RHEA:57048"/>
        <dbReference type="Rhea" id="RHEA-COMP:10288"/>
        <dbReference type="Rhea" id="RHEA-COMP:12157"/>
        <dbReference type="Rhea" id="RHEA-COMP:12158"/>
        <dbReference type="Rhea" id="RHEA-COMP:14821"/>
        <dbReference type="ChEBI" id="CHEBI:13193"/>
        <dbReference type="ChEBI" id="CHEBI:15378"/>
        <dbReference type="ChEBI" id="CHEBI:17499"/>
        <dbReference type="ChEBI" id="CHEBI:29950"/>
        <dbReference type="ChEBI" id="CHEBI:30616"/>
        <dbReference type="ChEBI" id="CHEBI:33019"/>
        <dbReference type="ChEBI" id="CHEBI:61963"/>
        <dbReference type="ChEBI" id="CHEBI:82748"/>
        <dbReference type="ChEBI" id="CHEBI:141453"/>
        <dbReference type="ChEBI" id="CHEBI:456215"/>
    </reaction>
    <physiologicalReaction direction="left-to-right" evidence="1">
        <dbReference type="Rhea" id="RHEA:57049"/>
    </physiologicalReaction>
</comment>
<comment type="cofactor">
    <cofactor evidence="1">
        <name>Mg(2+)</name>
        <dbReference type="ChEBI" id="CHEBI:18420"/>
    </cofactor>
</comment>
<comment type="cofactor">
    <cofactor evidence="1">
        <name>[4Fe-4S] cluster</name>
        <dbReference type="ChEBI" id="CHEBI:49883"/>
    </cofactor>
    <text evidence="1">Binds 1 [4Fe-4S] cluster per subunit. The cluster is chelated by three Cys residues, the fourth Fe has a free coordination site that may bind a sulfur atom transferred from the persulfide of IscS.</text>
</comment>
<comment type="pathway">
    <text evidence="1">tRNA modification.</text>
</comment>
<comment type="subunit">
    <text evidence="1">Homodimer.</text>
</comment>
<comment type="subcellular location">
    <subcellularLocation>
        <location evidence="1">Cytoplasm</location>
    </subcellularLocation>
</comment>
<comment type="miscellaneous">
    <text evidence="1">The thiolation reaction likely consists of two steps: a first activation step by ATP to form an adenylated intermediate of the target base of tRNA, and a second nucleophilic substitution step of the sulfur (S) atom supplied by the hydrosulfide attached to the Fe-S cluster.</text>
</comment>
<comment type="similarity">
    <text evidence="1">Belongs to the TtcA family.</text>
</comment>
<keyword id="KW-0004">4Fe-4S</keyword>
<keyword id="KW-0067">ATP-binding</keyword>
<keyword id="KW-0963">Cytoplasm</keyword>
<keyword id="KW-0408">Iron</keyword>
<keyword id="KW-0411">Iron-sulfur</keyword>
<keyword id="KW-0460">Magnesium</keyword>
<keyword id="KW-0479">Metal-binding</keyword>
<keyword id="KW-0547">Nucleotide-binding</keyword>
<keyword id="KW-0694">RNA-binding</keyword>
<keyword id="KW-0808">Transferase</keyword>
<keyword id="KW-0819">tRNA processing</keyword>
<keyword id="KW-0820">tRNA-binding</keyword>
<proteinExistence type="inferred from homology"/>
<sequence>MTQLAQQEKKQTYNFNKLQKRLRRNVGNAITDFGMIEDGDKVMVCLSGGKDSYTLLDILLNLQQNAPIKFDIVAVNLDQKQPGFPEHVLPEYLESIGVDYKIVQENTYGIVKEKIPEGKTTCSLCSRLRRGILYRTATELGATKIALGHHRDDMLATLFLNMFYGGKMKSMPPKLISDDGKQIVIRPLAYCKEKDIEKYAIAKEFPIIPCNLCGSQPNLQRQVVKEMLNTWDRQYPGRLETMFSAMQNITLSHMCDPKLFDFKGIKHGQLIDGIEGDTAFDEEKITPMQFEDEDQTDFSNNEMINFKEVN</sequence>
<organism>
    <name type="scientific">Haemophilus influenzae (strain 86-028NP)</name>
    <dbReference type="NCBI Taxonomy" id="281310"/>
    <lineage>
        <taxon>Bacteria</taxon>
        <taxon>Pseudomonadati</taxon>
        <taxon>Pseudomonadota</taxon>
        <taxon>Gammaproteobacteria</taxon>
        <taxon>Pasteurellales</taxon>
        <taxon>Pasteurellaceae</taxon>
        <taxon>Haemophilus</taxon>
    </lineage>
</organism>
<accession>Q4QK81</accession>
<dbReference type="EC" id="2.8.1.-" evidence="1"/>
<dbReference type="EMBL" id="CP000057">
    <property type="protein sequence ID" value="AAX88566.1"/>
    <property type="molecule type" value="Genomic_DNA"/>
</dbReference>
<dbReference type="RefSeq" id="WP_011272634.1">
    <property type="nucleotide sequence ID" value="NC_007146.2"/>
</dbReference>
<dbReference type="SMR" id="Q4QK81"/>
<dbReference type="KEGG" id="hit:NTHI1789"/>
<dbReference type="HOGENOM" id="CLU_026481_0_0_6"/>
<dbReference type="Proteomes" id="UP000002525">
    <property type="component" value="Chromosome"/>
</dbReference>
<dbReference type="GO" id="GO:0005737">
    <property type="term" value="C:cytoplasm"/>
    <property type="evidence" value="ECO:0007669"/>
    <property type="project" value="UniProtKB-SubCell"/>
</dbReference>
<dbReference type="GO" id="GO:0051539">
    <property type="term" value="F:4 iron, 4 sulfur cluster binding"/>
    <property type="evidence" value="ECO:0007669"/>
    <property type="project" value="UniProtKB-UniRule"/>
</dbReference>
<dbReference type="GO" id="GO:0005524">
    <property type="term" value="F:ATP binding"/>
    <property type="evidence" value="ECO:0007669"/>
    <property type="project" value="UniProtKB-UniRule"/>
</dbReference>
<dbReference type="GO" id="GO:0000287">
    <property type="term" value="F:magnesium ion binding"/>
    <property type="evidence" value="ECO:0007669"/>
    <property type="project" value="UniProtKB-UniRule"/>
</dbReference>
<dbReference type="GO" id="GO:0016783">
    <property type="term" value="F:sulfurtransferase activity"/>
    <property type="evidence" value="ECO:0007669"/>
    <property type="project" value="UniProtKB-UniRule"/>
</dbReference>
<dbReference type="GO" id="GO:0000049">
    <property type="term" value="F:tRNA binding"/>
    <property type="evidence" value="ECO:0007669"/>
    <property type="project" value="UniProtKB-KW"/>
</dbReference>
<dbReference type="GO" id="GO:0034227">
    <property type="term" value="P:tRNA thio-modification"/>
    <property type="evidence" value="ECO:0007669"/>
    <property type="project" value="UniProtKB-UniRule"/>
</dbReference>
<dbReference type="CDD" id="cd24138">
    <property type="entry name" value="TtcA-like"/>
    <property type="match status" value="1"/>
</dbReference>
<dbReference type="Gene3D" id="3.40.50.620">
    <property type="entry name" value="HUPs"/>
    <property type="match status" value="1"/>
</dbReference>
<dbReference type="HAMAP" id="MF_01850">
    <property type="entry name" value="TtcA"/>
    <property type="match status" value="1"/>
</dbReference>
<dbReference type="InterPro" id="IPR014729">
    <property type="entry name" value="Rossmann-like_a/b/a_fold"/>
</dbReference>
<dbReference type="InterPro" id="IPR011063">
    <property type="entry name" value="TilS/TtcA_N"/>
</dbReference>
<dbReference type="InterPro" id="IPR012089">
    <property type="entry name" value="tRNA_Cyd_32_2_STrfase"/>
</dbReference>
<dbReference type="InterPro" id="IPR035107">
    <property type="entry name" value="tRNA_thiolation_TtcA_Ctu1"/>
</dbReference>
<dbReference type="NCBIfam" id="NF007972">
    <property type="entry name" value="PRK10696.1"/>
    <property type="match status" value="1"/>
</dbReference>
<dbReference type="PANTHER" id="PTHR43686:SF1">
    <property type="entry name" value="AMINOTRAN_5 DOMAIN-CONTAINING PROTEIN"/>
    <property type="match status" value="1"/>
</dbReference>
<dbReference type="PANTHER" id="PTHR43686">
    <property type="entry name" value="SULFURTRANSFERASE-RELATED"/>
    <property type="match status" value="1"/>
</dbReference>
<dbReference type="Pfam" id="PF01171">
    <property type="entry name" value="ATP_bind_3"/>
    <property type="match status" value="1"/>
</dbReference>
<dbReference type="PIRSF" id="PIRSF004976">
    <property type="entry name" value="ATPase_YdaO"/>
    <property type="match status" value="1"/>
</dbReference>
<dbReference type="SUPFAM" id="SSF52402">
    <property type="entry name" value="Adenine nucleotide alpha hydrolases-like"/>
    <property type="match status" value="1"/>
</dbReference>
<protein>
    <recommendedName>
        <fullName evidence="1">tRNA-cytidine(32) 2-sulfurtransferase</fullName>
        <ecNumber evidence="1">2.8.1.-</ecNumber>
    </recommendedName>
    <alternativeName>
        <fullName evidence="1">Two-thiocytidine biosynthesis protein A</fullName>
    </alternativeName>
    <alternativeName>
        <fullName evidence="1">tRNA 2-thiocytidine biosynthesis protein TtcA</fullName>
    </alternativeName>
</protein>
<gene>
    <name evidence="1" type="primary">ttcA</name>
    <name type="ordered locus">NTHI1789</name>
</gene>
<feature type="chain" id="PRO_0000348748" description="tRNA-cytidine(32) 2-sulfurtransferase">
    <location>
        <begin position="1"/>
        <end position="310"/>
    </location>
</feature>
<feature type="short sequence motif" description="PP-loop motif" evidence="1">
    <location>
        <begin position="47"/>
        <end position="52"/>
    </location>
</feature>
<feature type="binding site" evidence="1">
    <location>
        <position position="122"/>
    </location>
    <ligand>
        <name>[4Fe-4S] cluster</name>
        <dbReference type="ChEBI" id="CHEBI:49883"/>
    </ligand>
</feature>
<feature type="binding site" evidence="1">
    <location>
        <position position="125"/>
    </location>
    <ligand>
        <name>[4Fe-4S] cluster</name>
        <dbReference type="ChEBI" id="CHEBI:49883"/>
    </ligand>
</feature>
<feature type="binding site" evidence="1">
    <location>
        <position position="213"/>
    </location>
    <ligand>
        <name>[4Fe-4S] cluster</name>
        <dbReference type="ChEBI" id="CHEBI:49883"/>
    </ligand>
</feature>
<reference key="1">
    <citation type="journal article" date="2005" name="J. Bacteriol.">
        <title>Genomic sequence of an otitis media isolate of nontypeable Haemophilus influenzae: comparative study with H. influenzae serotype d, strain KW20.</title>
        <authorList>
            <person name="Harrison A."/>
            <person name="Dyer D.W."/>
            <person name="Gillaspy A."/>
            <person name="Ray W.C."/>
            <person name="Mungur R."/>
            <person name="Carson M.B."/>
            <person name="Zhong H."/>
            <person name="Gipson J."/>
            <person name="Gipson M."/>
            <person name="Johnson L.S."/>
            <person name="Lewis L."/>
            <person name="Bakaletz L.O."/>
            <person name="Munson R.S. Jr."/>
        </authorList>
    </citation>
    <scope>NUCLEOTIDE SEQUENCE [LARGE SCALE GENOMIC DNA]</scope>
    <source>
        <strain>86-028NP</strain>
    </source>
</reference>